<evidence type="ECO:0000250" key="1">
    <source>
        <dbReference type="UniProtKB" id="Q8NFH4"/>
    </source>
</evidence>
<evidence type="ECO:0000255" key="2"/>
<evidence type="ECO:0000269" key="3">
    <source>
    </source>
</evidence>
<evidence type="ECO:0000305" key="4"/>
<evidence type="ECO:0000312" key="5">
    <source>
        <dbReference type="EMBL" id="AAS77422.1"/>
    </source>
</evidence>
<evidence type="ECO:0000312" key="6">
    <source>
        <dbReference type="FlyBase" id="FBgn0039301"/>
    </source>
</evidence>
<evidence type="ECO:0000312" key="7">
    <source>
        <dbReference type="Proteomes" id="UP000000803"/>
    </source>
</evidence>
<comment type="function">
    <text evidence="1">As part of the nuclear pore complex (NPC), has a role in its assembly and function.</text>
</comment>
<comment type="function">
    <text evidence="3">(Microbial infection) Required for optimal replication of E.chaffeensis.</text>
</comment>
<comment type="subcellular location">
    <subcellularLocation>
        <location evidence="1">Nucleus</location>
        <location evidence="1">Nuclear pore complex</location>
    </subcellularLocation>
</comment>
<comment type="disruption phenotype">
    <text evidence="3">(Microbial infection) After infection with E.chaffeensis, results in reduced bacterial replication rate and increased survival.</text>
</comment>
<gene>
    <name evidence="6" type="primary">Nup37</name>
    <name evidence="6" type="ORF">CG11875</name>
</gene>
<dbReference type="EMBL" id="AE014297">
    <property type="protein sequence ID" value="AAF56429.1"/>
    <property type="molecule type" value="Genomic_DNA"/>
</dbReference>
<dbReference type="EMBL" id="AE014297">
    <property type="protein sequence ID" value="AGB96330.1"/>
    <property type="molecule type" value="Genomic_DNA"/>
</dbReference>
<dbReference type="EMBL" id="BT012297">
    <property type="protein sequence ID" value="AAS77422.1"/>
    <property type="molecule type" value="mRNA"/>
</dbReference>
<dbReference type="RefSeq" id="NP_001262950.1">
    <property type="nucleotide sequence ID" value="NM_001276021.1"/>
</dbReference>
<dbReference type="RefSeq" id="NP_651360.1">
    <property type="nucleotide sequence ID" value="NM_143103.4"/>
</dbReference>
<dbReference type="SMR" id="Q9VBU8"/>
<dbReference type="ComplexPortal" id="CPX-2568">
    <property type="entry name" value="Nuclear pore complex"/>
</dbReference>
<dbReference type="FunCoup" id="Q9VBU8">
    <property type="interactions" value="757"/>
</dbReference>
<dbReference type="IntAct" id="Q9VBU8">
    <property type="interactions" value="1"/>
</dbReference>
<dbReference type="STRING" id="7227.FBpp0304467"/>
<dbReference type="PaxDb" id="7227-FBpp0304467"/>
<dbReference type="DNASU" id="43040"/>
<dbReference type="EnsemblMetazoa" id="FBtr0084812">
    <property type="protein sequence ID" value="FBpp0084187"/>
    <property type="gene ID" value="FBgn0039301"/>
</dbReference>
<dbReference type="EnsemblMetazoa" id="FBtr0332158">
    <property type="protein sequence ID" value="FBpp0304467"/>
    <property type="gene ID" value="FBgn0039301"/>
</dbReference>
<dbReference type="GeneID" id="43040"/>
<dbReference type="KEGG" id="dme:Dmel_CG11875"/>
<dbReference type="UCSC" id="CG11875-RA">
    <property type="organism name" value="d. melanogaster"/>
</dbReference>
<dbReference type="AGR" id="FB:FBgn0039301"/>
<dbReference type="CTD" id="79023"/>
<dbReference type="FlyBase" id="FBgn0039301">
    <property type="gene designation" value="Nup37"/>
</dbReference>
<dbReference type="VEuPathDB" id="VectorBase:FBgn0039301"/>
<dbReference type="eggNOG" id="KOG0266">
    <property type="taxonomic scope" value="Eukaryota"/>
</dbReference>
<dbReference type="GeneTree" id="ENSGT00390000010777"/>
<dbReference type="HOGENOM" id="CLU_074370_0_0_1"/>
<dbReference type="InParanoid" id="Q9VBU8"/>
<dbReference type="OMA" id="FWKVQIK"/>
<dbReference type="OrthoDB" id="340259at2759"/>
<dbReference type="PhylomeDB" id="Q9VBU8"/>
<dbReference type="Reactome" id="R-DME-159227">
    <property type="pathway name" value="Transport of the SLBP independent Mature mRNA"/>
</dbReference>
<dbReference type="Reactome" id="R-DME-159230">
    <property type="pathway name" value="Transport of the SLBP Dependant Mature mRNA"/>
</dbReference>
<dbReference type="Reactome" id="R-DME-159231">
    <property type="pathway name" value="Transport of Mature mRNA Derived from an Intronless Transcript"/>
</dbReference>
<dbReference type="Reactome" id="R-DME-159236">
    <property type="pathway name" value="Transport of Mature mRNA derived from an Intron-Containing Transcript"/>
</dbReference>
<dbReference type="Reactome" id="R-DME-3108214">
    <property type="pathway name" value="SUMOylation of DNA damage response and repair proteins"/>
</dbReference>
<dbReference type="Reactome" id="R-DME-3301854">
    <property type="pathway name" value="Nuclear Pore Complex (NPC) Disassembly"/>
</dbReference>
<dbReference type="Reactome" id="R-DME-4085377">
    <property type="pathway name" value="SUMOylation of SUMOylation proteins"/>
</dbReference>
<dbReference type="Reactome" id="R-DME-4551638">
    <property type="pathway name" value="SUMOylation of chromatin organization proteins"/>
</dbReference>
<dbReference type="Reactome" id="R-DME-4615885">
    <property type="pathway name" value="SUMOylation of DNA replication proteins"/>
</dbReference>
<dbReference type="Reactome" id="R-DME-5578749">
    <property type="pathway name" value="Transcriptional regulation by small RNAs"/>
</dbReference>
<dbReference type="Reactome" id="R-DME-9615933">
    <property type="pathway name" value="Postmitotic nuclear pore complex (NPC) reformation"/>
</dbReference>
<dbReference type="BioGRID-ORCS" id="43040">
    <property type="hits" value="0 hits in 1 CRISPR screen"/>
</dbReference>
<dbReference type="GenomeRNAi" id="43040"/>
<dbReference type="PRO" id="PR:Q9VBU8"/>
<dbReference type="Proteomes" id="UP000000803">
    <property type="component" value="Chromosome 3R"/>
</dbReference>
<dbReference type="Bgee" id="FBgn0039301">
    <property type="expression patterns" value="Expressed in secondary oocyte and 35 other cell types or tissues"/>
</dbReference>
<dbReference type="GO" id="GO:0031080">
    <property type="term" value="C:nuclear pore outer ring"/>
    <property type="evidence" value="ECO:0000250"/>
    <property type="project" value="FlyBase"/>
</dbReference>
<dbReference type="GO" id="GO:0051028">
    <property type="term" value="P:mRNA transport"/>
    <property type="evidence" value="ECO:0007669"/>
    <property type="project" value="UniProtKB-KW"/>
</dbReference>
<dbReference type="GO" id="GO:0015031">
    <property type="term" value="P:protein transport"/>
    <property type="evidence" value="ECO:0007669"/>
    <property type="project" value="UniProtKB-KW"/>
</dbReference>
<dbReference type="FunFam" id="2.130.10.10:FF:001751">
    <property type="entry name" value="GM17824"/>
    <property type="match status" value="1"/>
</dbReference>
<dbReference type="Gene3D" id="2.130.10.10">
    <property type="entry name" value="YVTN repeat-like/Quinoprotein amine dehydrogenase"/>
    <property type="match status" value="1"/>
</dbReference>
<dbReference type="InterPro" id="IPR037626">
    <property type="entry name" value="NUP37"/>
</dbReference>
<dbReference type="InterPro" id="IPR015943">
    <property type="entry name" value="WD40/YVTN_repeat-like_dom_sf"/>
</dbReference>
<dbReference type="InterPro" id="IPR036322">
    <property type="entry name" value="WD40_repeat_dom_sf"/>
</dbReference>
<dbReference type="InterPro" id="IPR001680">
    <property type="entry name" value="WD40_rpt"/>
</dbReference>
<dbReference type="PANTHER" id="PTHR22806:SF0">
    <property type="entry name" value="NUCLEOPORIN NUP37"/>
    <property type="match status" value="1"/>
</dbReference>
<dbReference type="PANTHER" id="PTHR22806">
    <property type="entry name" value="NUCLEOPORIN NUP37 P37 -RELATED"/>
    <property type="match status" value="1"/>
</dbReference>
<dbReference type="Pfam" id="PF00400">
    <property type="entry name" value="WD40"/>
    <property type="match status" value="1"/>
</dbReference>
<dbReference type="SMART" id="SM00320">
    <property type="entry name" value="WD40"/>
    <property type="match status" value="3"/>
</dbReference>
<dbReference type="SUPFAM" id="SSF50978">
    <property type="entry name" value="WD40 repeat-like"/>
    <property type="match status" value="1"/>
</dbReference>
<dbReference type="PROSITE" id="PS50082">
    <property type="entry name" value="WD_REPEATS_2"/>
    <property type="match status" value="1"/>
</dbReference>
<dbReference type="PROSITE" id="PS50294">
    <property type="entry name" value="WD_REPEATS_REGION"/>
    <property type="match status" value="1"/>
</dbReference>
<proteinExistence type="evidence at transcript level"/>
<keyword id="KW-0509">mRNA transport</keyword>
<keyword id="KW-0906">Nuclear pore complex</keyword>
<keyword id="KW-0539">Nucleus</keyword>
<keyword id="KW-0653">Protein transport</keyword>
<keyword id="KW-1185">Reference proteome</keyword>
<keyword id="KW-0677">Repeat</keyword>
<keyword id="KW-0811">Translocation</keyword>
<keyword id="KW-0813">Transport</keyword>
<keyword id="KW-0853">WD repeat</keyword>
<accession>Q9VBU8</accession>
<protein>
    <recommendedName>
        <fullName evidence="4">Nucleoporin Nup37</fullName>
    </recommendedName>
    <alternativeName>
        <fullName evidence="4">37 kDa nucleoporin</fullName>
    </alternativeName>
</protein>
<organism evidence="7">
    <name type="scientific">Drosophila melanogaster</name>
    <name type="common">Fruit fly</name>
    <dbReference type="NCBI Taxonomy" id="7227"/>
    <lineage>
        <taxon>Eukaryota</taxon>
        <taxon>Metazoa</taxon>
        <taxon>Ecdysozoa</taxon>
        <taxon>Arthropoda</taxon>
        <taxon>Hexapoda</taxon>
        <taxon>Insecta</taxon>
        <taxon>Pterygota</taxon>
        <taxon>Neoptera</taxon>
        <taxon>Endopterygota</taxon>
        <taxon>Diptera</taxon>
        <taxon>Brachycera</taxon>
        <taxon>Muscomorpha</taxon>
        <taxon>Ephydroidea</taxon>
        <taxon>Drosophilidae</taxon>
        <taxon>Drosophila</taxon>
        <taxon>Sophophora</taxon>
    </lineage>
</organism>
<name>NUP37_DROME</name>
<sequence>MRSVIEPDHSIQLNEAIYCYDICTNDFAYNLIAVAFRKHLSLLLVGLPEESGEFGYTRLQDMDLGEKEQRSVSALAFSPDTSLNCTPNNVTLCAANGSQLKLYRTDLGQFTSLQVLRGHGDYVNDVSWVCDGELLASVSDDFTCRFWTTTGGGENVITFGLSSAGMSVKSHPEDPNKVLVAEKKGIIHLYNVTLKQTVISVESPKFPLMSADWAHSNRLFITSLAGGDVVTWDLNRPYVPADVKQVHEDCGRVVRFAPGSSEMVIAMVIGLTLKVFAAKSTVPLLEASLKSYGGMAWHQRLPYISAVSDRKLLFWKVQMK</sequence>
<feature type="chain" id="PRO_0000446160" description="Nucleoporin Nup37" evidence="4">
    <location>
        <begin position="1"/>
        <end position="320"/>
    </location>
</feature>
<feature type="repeat" description="WD 1" evidence="2">
    <location>
        <begin position="67"/>
        <end position="113"/>
    </location>
</feature>
<feature type="repeat" description="WD 2" evidence="2">
    <location>
        <begin position="118"/>
        <end position="157"/>
    </location>
</feature>
<feature type="repeat" description="WD 3" evidence="2">
    <location>
        <begin position="160"/>
        <end position="200"/>
    </location>
</feature>
<feature type="repeat" description="WD 4" evidence="2">
    <location>
        <begin position="203"/>
        <end position="242"/>
    </location>
</feature>
<reference evidence="7" key="1">
    <citation type="journal article" date="2000" name="Science">
        <title>The genome sequence of Drosophila melanogaster.</title>
        <authorList>
            <person name="Adams M.D."/>
            <person name="Celniker S.E."/>
            <person name="Holt R.A."/>
            <person name="Evans C.A."/>
            <person name="Gocayne J.D."/>
            <person name="Amanatides P.G."/>
            <person name="Scherer S.E."/>
            <person name="Li P.W."/>
            <person name="Hoskins R.A."/>
            <person name="Galle R.F."/>
            <person name="George R.A."/>
            <person name="Lewis S.E."/>
            <person name="Richards S."/>
            <person name="Ashburner M."/>
            <person name="Henderson S.N."/>
            <person name="Sutton G.G."/>
            <person name="Wortman J.R."/>
            <person name="Yandell M.D."/>
            <person name="Zhang Q."/>
            <person name="Chen L.X."/>
            <person name="Brandon R.C."/>
            <person name="Rogers Y.-H.C."/>
            <person name="Blazej R.G."/>
            <person name="Champe M."/>
            <person name="Pfeiffer B.D."/>
            <person name="Wan K.H."/>
            <person name="Doyle C."/>
            <person name="Baxter E.G."/>
            <person name="Helt G."/>
            <person name="Nelson C.R."/>
            <person name="Miklos G.L.G."/>
            <person name="Abril J.F."/>
            <person name="Agbayani A."/>
            <person name="An H.-J."/>
            <person name="Andrews-Pfannkoch C."/>
            <person name="Baldwin D."/>
            <person name="Ballew R.M."/>
            <person name="Basu A."/>
            <person name="Baxendale J."/>
            <person name="Bayraktaroglu L."/>
            <person name="Beasley E.M."/>
            <person name="Beeson K.Y."/>
            <person name="Benos P.V."/>
            <person name="Berman B.P."/>
            <person name="Bhandari D."/>
            <person name="Bolshakov S."/>
            <person name="Borkova D."/>
            <person name="Botchan M.R."/>
            <person name="Bouck J."/>
            <person name="Brokstein P."/>
            <person name="Brottier P."/>
            <person name="Burtis K.C."/>
            <person name="Busam D.A."/>
            <person name="Butler H."/>
            <person name="Cadieu E."/>
            <person name="Center A."/>
            <person name="Chandra I."/>
            <person name="Cherry J.M."/>
            <person name="Cawley S."/>
            <person name="Dahlke C."/>
            <person name="Davenport L.B."/>
            <person name="Davies P."/>
            <person name="de Pablos B."/>
            <person name="Delcher A."/>
            <person name="Deng Z."/>
            <person name="Mays A.D."/>
            <person name="Dew I."/>
            <person name="Dietz S.M."/>
            <person name="Dodson K."/>
            <person name="Doup L.E."/>
            <person name="Downes M."/>
            <person name="Dugan-Rocha S."/>
            <person name="Dunkov B.C."/>
            <person name="Dunn P."/>
            <person name="Durbin K.J."/>
            <person name="Evangelista C.C."/>
            <person name="Ferraz C."/>
            <person name="Ferriera S."/>
            <person name="Fleischmann W."/>
            <person name="Fosler C."/>
            <person name="Gabrielian A.E."/>
            <person name="Garg N.S."/>
            <person name="Gelbart W.M."/>
            <person name="Glasser K."/>
            <person name="Glodek A."/>
            <person name="Gong F."/>
            <person name="Gorrell J.H."/>
            <person name="Gu Z."/>
            <person name="Guan P."/>
            <person name="Harris M."/>
            <person name="Harris N.L."/>
            <person name="Harvey D.A."/>
            <person name="Heiman T.J."/>
            <person name="Hernandez J.R."/>
            <person name="Houck J."/>
            <person name="Hostin D."/>
            <person name="Houston K.A."/>
            <person name="Howland T.J."/>
            <person name="Wei M.-H."/>
            <person name="Ibegwam C."/>
            <person name="Jalali M."/>
            <person name="Kalush F."/>
            <person name="Karpen G.H."/>
            <person name="Ke Z."/>
            <person name="Kennison J.A."/>
            <person name="Ketchum K.A."/>
            <person name="Kimmel B.E."/>
            <person name="Kodira C.D."/>
            <person name="Kraft C.L."/>
            <person name="Kravitz S."/>
            <person name="Kulp D."/>
            <person name="Lai Z."/>
            <person name="Lasko P."/>
            <person name="Lei Y."/>
            <person name="Levitsky A.A."/>
            <person name="Li J.H."/>
            <person name="Li Z."/>
            <person name="Liang Y."/>
            <person name="Lin X."/>
            <person name="Liu X."/>
            <person name="Mattei B."/>
            <person name="McIntosh T.C."/>
            <person name="McLeod M.P."/>
            <person name="McPherson D."/>
            <person name="Merkulov G."/>
            <person name="Milshina N.V."/>
            <person name="Mobarry C."/>
            <person name="Morris J."/>
            <person name="Moshrefi A."/>
            <person name="Mount S.M."/>
            <person name="Moy M."/>
            <person name="Murphy B."/>
            <person name="Murphy L."/>
            <person name="Muzny D.M."/>
            <person name="Nelson D.L."/>
            <person name="Nelson D.R."/>
            <person name="Nelson K.A."/>
            <person name="Nixon K."/>
            <person name="Nusskern D.R."/>
            <person name="Pacleb J.M."/>
            <person name="Palazzolo M."/>
            <person name="Pittman G.S."/>
            <person name="Pan S."/>
            <person name="Pollard J."/>
            <person name="Puri V."/>
            <person name="Reese M.G."/>
            <person name="Reinert K."/>
            <person name="Remington K."/>
            <person name="Saunders R.D.C."/>
            <person name="Scheeler F."/>
            <person name="Shen H."/>
            <person name="Shue B.C."/>
            <person name="Siden-Kiamos I."/>
            <person name="Simpson M."/>
            <person name="Skupski M.P."/>
            <person name="Smith T.J."/>
            <person name="Spier E."/>
            <person name="Spradling A.C."/>
            <person name="Stapleton M."/>
            <person name="Strong R."/>
            <person name="Sun E."/>
            <person name="Svirskas R."/>
            <person name="Tector C."/>
            <person name="Turner R."/>
            <person name="Venter E."/>
            <person name="Wang A.H."/>
            <person name="Wang X."/>
            <person name="Wang Z.-Y."/>
            <person name="Wassarman D.A."/>
            <person name="Weinstock G.M."/>
            <person name="Weissenbach J."/>
            <person name="Williams S.M."/>
            <person name="Woodage T."/>
            <person name="Worley K.C."/>
            <person name="Wu D."/>
            <person name="Yang S."/>
            <person name="Yao Q.A."/>
            <person name="Ye J."/>
            <person name="Yeh R.-F."/>
            <person name="Zaveri J.S."/>
            <person name="Zhan M."/>
            <person name="Zhang G."/>
            <person name="Zhao Q."/>
            <person name="Zheng L."/>
            <person name="Zheng X.H."/>
            <person name="Zhong F.N."/>
            <person name="Zhong W."/>
            <person name="Zhou X."/>
            <person name="Zhu S.C."/>
            <person name="Zhu X."/>
            <person name="Smith H.O."/>
            <person name="Gibbs R.A."/>
            <person name="Myers E.W."/>
            <person name="Rubin G.M."/>
            <person name="Venter J.C."/>
        </authorList>
    </citation>
    <scope>NUCLEOTIDE SEQUENCE [LARGE SCALE GENOMIC DNA]</scope>
    <source>
        <strain evidence="7">Berkeley</strain>
    </source>
</reference>
<reference evidence="7" key="2">
    <citation type="journal article" date="2002" name="Genome Biol.">
        <title>Annotation of the Drosophila melanogaster euchromatic genome: a systematic review.</title>
        <authorList>
            <person name="Misra S."/>
            <person name="Crosby M.A."/>
            <person name="Mungall C.J."/>
            <person name="Matthews B.B."/>
            <person name="Campbell K.S."/>
            <person name="Hradecky P."/>
            <person name="Huang Y."/>
            <person name="Kaminker J.S."/>
            <person name="Millburn G.H."/>
            <person name="Prochnik S.E."/>
            <person name="Smith C.D."/>
            <person name="Tupy J.L."/>
            <person name="Whitfield E.J."/>
            <person name="Bayraktaroglu L."/>
            <person name="Berman B.P."/>
            <person name="Bettencourt B.R."/>
            <person name="Celniker S.E."/>
            <person name="de Grey A.D.N.J."/>
            <person name="Drysdale R.A."/>
            <person name="Harris N.L."/>
            <person name="Richter J."/>
            <person name="Russo S."/>
            <person name="Schroeder A.J."/>
            <person name="Shu S.Q."/>
            <person name="Stapleton M."/>
            <person name="Yamada C."/>
            <person name="Ashburner M."/>
            <person name="Gelbart W.M."/>
            <person name="Rubin G.M."/>
            <person name="Lewis S.E."/>
        </authorList>
    </citation>
    <scope>GENOME REANNOTATION</scope>
</reference>
<reference evidence="5" key="3">
    <citation type="submission" date="2004-03" db="EMBL/GenBank/DDBJ databases">
        <authorList>
            <person name="Stapleton M."/>
            <person name="Carlson J."/>
            <person name="Chavez C."/>
            <person name="Frise E."/>
            <person name="George R."/>
            <person name="Pacleb J."/>
            <person name="Park S."/>
            <person name="Wan K."/>
            <person name="Yu C."/>
            <person name="Rubin G.M."/>
            <person name="Celniker S."/>
        </authorList>
    </citation>
    <scope>NUCLEOTIDE SEQUENCE [LARGE SCALE MRNA]</scope>
    <source>
        <strain evidence="5">Berkeley</strain>
        <tissue evidence="5">Embryo</tissue>
    </source>
</reference>
<reference evidence="4" key="4">
    <citation type="journal article" date="2012" name="Infect. Immun.">
        <title>Identification of critical host mitochondrion-associated genes during Ehrlichia chaffeensis infections.</title>
        <authorList>
            <person name="Von Ohlen T."/>
            <person name="Luce-Fedrow A."/>
            <person name="Ortega M.T."/>
            <person name="Ganta R.R."/>
            <person name="Chapes S.K."/>
        </authorList>
    </citation>
    <scope>FUNCTION (MICROBIAL INFECTION)</scope>
    <scope>DISRUPTION PHENOTYPE (MICROBIAL INFECTION)</scope>
</reference>